<proteinExistence type="inferred from homology"/>
<feature type="chain" id="PRO_0000362241" description="ATP synthase subunit a">
    <location>
        <begin position="1"/>
        <end position="252"/>
    </location>
</feature>
<feature type="transmembrane region" description="Helical" evidence="1">
    <location>
        <begin position="29"/>
        <end position="49"/>
    </location>
</feature>
<feature type="transmembrane region" description="Helical" evidence="1">
    <location>
        <begin position="87"/>
        <end position="107"/>
    </location>
</feature>
<feature type="transmembrane region" description="Helical" evidence="1">
    <location>
        <begin position="116"/>
        <end position="136"/>
    </location>
</feature>
<feature type="transmembrane region" description="Helical" evidence="1">
    <location>
        <begin position="146"/>
        <end position="166"/>
    </location>
</feature>
<feature type="transmembrane region" description="Helical" evidence="1">
    <location>
        <begin position="183"/>
        <end position="205"/>
    </location>
</feature>
<feature type="transmembrane region" description="Helical" evidence="1">
    <location>
        <begin position="219"/>
        <end position="239"/>
    </location>
</feature>
<name>ATP6_BARQU</name>
<reference key="1">
    <citation type="journal article" date="2004" name="Proc. Natl. Acad. Sci. U.S.A.">
        <title>The louse-borne human pathogen Bartonella quintana is a genomic derivative of the zoonotic agent Bartonella henselae.</title>
        <authorList>
            <person name="Alsmark U.C.M."/>
            <person name="Frank A.C."/>
            <person name="Karlberg E.O."/>
            <person name="Legault B.-A."/>
            <person name="Ardell D.H."/>
            <person name="Canbaeck B."/>
            <person name="Eriksson A.-S."/>
            <person name="Naeslund A.K."/>
            <person name="Handley S.A."/>
            <person name="Huvet M."/>
            <person name="La Scola B."/>
            <person name="Holmberg M."/>
            <person name="Andersson S.G.E."/>
        </authorList>
    </citation>
    <scope>NUCLEOTIDE SEQUENCE [LARGE SCALE GENOMIC DNA]</scope>
    <source>
        <strain>Toulouse</strain>
    </source>
</reference>
<protein>
    <recommendedName>
        <fullName evidence="1">ATP synthase subunit a</fullName>
    </recommendedName>
    <alternativeName>
        <fullName evidence="1">ATP synthase F0 sector subunit a</fullName>
    </alternativeName>
    <alternativeName>
        <fullName evidence="1">F-ATPase subunit 6</fullName>
    </alternativeName>
</protein>
<organism>
    <name type="scientific">Bartonella quintana (strain Toulouse)</name>
    <name type="common">Rochalimaea quintana</name>
    <dbReference type="NCBI Taxonomy" id="283165"/>
    <lineage>
        <taxon>Bacteria</taxon>
        <taxon>Pseudomonadati</taxon>
        <taxon>Pseudomonadota</taxon>
        <taxon>Alphaproteobacteria</taxon>
        <taxon>Hyphomicrobiales</taxon>
        <taxon>Bartonellaceae</taxon>
        <taxon>Bartonella</taxon>
    </lineage>
</organism>
<comment type="function">
    <text evidence="1">Key component of the proton channel; it plays a direct role in the translocation of protons across the membrane.</text>
</comment>
<comment type="subunit">
    <text evidence="1">F-type ATPases have 2 components, CF(1) - the catalytic core - and CF(0) - the membrane proton channel. CF(1) has five subunits: alpha(3), beta(3), gamma(1), delta(1), epsilon(1). CF(0) has three main subunits: a(1), b(2) and c(9-12). The alpha and beta chains form an alternating ring which encloses part of the gamma chain. CF(1) is attached to CF(0) by a central stalk formed by the gamma and epsilon chains, while a peripheral stalk is formed by the delta and b chains.</text>
</comment>
<comment type="subcellular location">
    <subcellularLocation>
        <location evidence="1">Cell inner membrane</location>
        <topology evidence="1">Multi-pass membrane protein</topology>
    </subcellularLocation>
</comment>
<comment type="similarity">
    <text evidence="1">Belongs to the ATPase A chain family.</text>
</comment>
<sequence>MTSHAPDPVHQFEISRLINISVGNMDLSFTNVSFFIIATVVATSVFLFISSSSRGLVPTRMQSISEIAYEFVASTLRESCGVQGMQFFPLVFSLFTFILVANFIGLFPYFYTITSQIMITFSLAMLVILTVVGYGFRKHGIGFLKLFVPSGVPVVILPLVTMIEVISFFSRPISLSLRLFANMLAGHITLKVFSGFIVSMIELGIMGVGGSILPLIMTVAITALEFLVAFLQAYVFTVLTCMYLNDAVHPGH</sequence>
<dbReference type="EMBL" id="BX897700">
    <property type="protein sequence ID" value="CAF25813.1"/>
    <property type="molecule type" value="Genomic_DNA"/>
</dbReference>
<dbReference type="RefSeq" id="WP_011179110.1">
    <property type="nucleotide sequence ID" value="NC_005955.1"/>
</dbReference>
<dbReference type="SMR" id="Q6G0H3"/>
<dbReference type="KEGG" id="bqu:BQ03130"/>
<dbReference type="eggNOG" id="COG0356">
    <property type="taxonomic scope" value="Bacteria"/>
</dbReference>
<dbReference type="HOGENOM" id="CLU_041018_0_2_5"/>
<dbReference type="OrthoDB" id="9809130at2"/>
<dbReference type="Proteomes" id="UP000000597">
    <property type="component" value="Chromosome"/>
</dbReference>
<dbReference type="GO" id="GO:0005886">
    <property type="term" value="C:plasma membrane"/>
    <property type="evidence" value="ECO:0007669"/>
    <property type="project" value="UniProtKB-SubCell"/>
</dbReference>
<dbReference type="GO" id="GO:0045259">
    <property type="term" value="C:proton-transporting ATP synthase complex"/>
    <property type="evidence" value="ECO:0007669"/>
    <property type="project" value="UniProtKB-KW"/>
</dbReference>
<dbReference type="GO" id="GO:0046933">
    <property type="term" value="F:proton-transporting ATP synthase activity, rotational mechanism"/>
    <property type="evidence" value="ECO:0007669"/>
    <property type="project" value="UniProtKB-UniRule"/>
</dbReference>
<dbReference type="CDD" id="cd00310">
    <property type="entry name" value="ATP-synt_Fo_a_6"/>
    <property type="match status" value="1"/>
</dbReference>
<dbReference type="FunFam" id="1.20.120.220:FF:000003">
    <property type="entry name" value="ATP synthase subunit a"/>
    <property type="match status" value="1"/>
</dbReference>
<dbReference type="Gene3D" id="1.20.120.220">
    <property type="entry name" value="ATP synthase, F0 complex, subunit A"/>
    <property type="match status" value="1"/>
</dbReference>
<dbReference type="HAMAP" id="MF_01393">
    <property type="entry name" value="ATP_synth_a_bact"/>
    <property type="match status" value="1"/>
</dbReference>
<dbReference type="InterPro" id="IPR000568">
    <property type="entry name" value="ATP_synth_F0_asu"/>
</dbReference>
<dbReference type="InterPro" id="IPR023011">
    <property type="entry name" value="ATP_synth_F0_asu_AS"/>
</dbReference>
<dbReference type="InterPro" id="IPR045083">
    <property type="entry name" value="ATP_synth_F0_asu_bact/mt"/>
</dbReference>
<dbReference type="InterPro" id="IPR035908">
    <property type="entry name" value="F0_ATP_A_sf"/>
</dbReference>
<dbReference type="NCBIfam" id="TIGR01131">
    <property type="entry name" value="ATP_synt_6_or_A"/>
    <property type="match status" value="1"/>
</dbReference>
<dbReference type="NCBIfam" id="NF004482">
    <property type="entry name" value="PRK05815.2-4"/>
    <property type="match status" value="1"/>
</dbReference>
<dbReference type="PANTHER" id="PTHR11410">
    <property type="entry name" value="ATP SYNTHASE SUBUNIT A"/>
    <property type="match status" value="1"/>
</dbReference>
<dbReference type="PANTHER" id="PTHR11410:SF0">
    <property type="entry name" value="ATP SYNTHASE SUBUNIT A"/>
    <property type="match status" value="1"/>
</dbReference>
<dbReference type="Pfam" id="PF00119">
    <property type="entry name" value="ATP-synt_A"/>
    <property type="match status" value="1"/>
</dbReference>
<dbReference type="PRINTS" id="PR00123">
    <property type="entry name" value="ATPASEA"/>
</dbReference>
<dbReference type="SUPFAM" id="SSF81336">
    <property type="entry name" value="F1F0 ATP synthase subunit A"/>
    <property type="match status" value="1"/>
</dbReference>
<dbReference type="PROSITE" id="PS00449">
    <property type="entry name" value="ATPASE_A"/>
    <property type="match status" value="1"/>
</dbReference>
<gene>
    <name evidence="1" type="primary">atpB</name>
    <name type="ordered locus">BQ03130</name>
</gene>
<evidence type="ECO:0000255" key="1">
    <source>
        <dbReference type="HAMAP-Rule" id="MF_01393"/>
    </source>
</evidence>
<keyword id="KW-0066">ATP synthesis</keyword>
<keyword id="KW-0997">Cell inner membrane</keyword>
<keyword id="KW-1003">Cell membrane</keyword>
<keyword id="KW-0138">CF(0)</keyword>
<keyword id="KW-0375">Hydrogen ion transport</keyword>
<keyword id="KW-0406">Ion transport</keyword>
<keyword id="KW-0472">Membrane</keyword>
<keyword id="KW-0812">Transmembrane</keyword>
<keyword id="KW-1133">Transmembrane helix</keyword>
<keyword id="KW-0813">Transport</keyword>
<accession>Q6G0H3</accession>